<gene>
    <name type="primary">embC</name>
    <name type="ordered locus">ML0106</name>
</gene>
<dbReference type="EC" id="2.4.2.-"/>
<dbReference type="EMBL" id="AL583917">
    <property type="protein sequence ID" value="CAC29614.1"/>
    <property type="molecule type" value="Genomic_DNA"/>
</dbReference>
<dbReference type="PIR" id="B86922">
    <property type="entry name" value="B86922"/>
</dbReference>
<dbReference type="RefSeq" id="NP_301203.1">
    <property type="nucleotide sequence ID" value="NC_002677.1"/>
</dbReference>
<dbReference type="RefSeq" id="WP_010907528.1">
    <property type="nucleotide sequence ID" value="NC_002677.1"/>
</dbReference>
<dbReference type="SMR" id="Q9CDA7"/>
<dbReference type="STRING" id="272631.gene:17573918"/>
<dbReference type="CAZy" id="GT53">
    <property type="family name" value="Glycosyltransferase Family 53"/>
</dbReference>
<dbReference type="KEGG" id="mle:ML0106"/>
<dbReference type="PATRIC" id="fig|272631.5.peg.169"/>
<dbReference type="Leproma" id="ML0106"/>
<dbReference type="eggNOG" id="COG1807">
    <property type="taxonomic scope" value="Bacteria"/>
</dbReference>
<dbReference type="HOGENOM" id="CLU_010182_0_0_11"/>
<dbReference type="OrthoDB" id="3584570at2"/>
<dbReference type="Proteomes" id="UP000000806">
    <property type="component" value="Chromosome"/>
</dbReference>
<dbReference type="GO" id="GO:0005886">
    <property type="term" value="C:plasma membrane"/>
    <property type="evidence" value="ECO:0007669"/>
    <property type="project" value="UniProtKB-SubCell"/>
</dbReference>
<dbReference type="GO" id="GO:0052636">
    <property type="term" value="F:arabinosyltransferase activity"/>
    <property type="evidence" value="ECO:0007669"/>
    <property type="project" value="InterPro"/>
</dbReference>
<dbReference type="GO" id="GO:0071766">
    <property type="term" value="P:Actinobacterium-type cell wall biogenesis"/>
    <property type="evidence" value="ECO:0007669"/>
    <property type="project" value="InterPro"/>
</dbReference>
<dbReference type="GO" id="GO:0071555">
    <property type="term" value="P:cell wall organization"/>
    <property type="evidence" value="ECO:0007669"/>
    <property type="project" value="UniProtKB-KW"/>
</dbReference>
<dbReference type="Gene3D" id="3.40.190.160">
    <property type="match status" value="1"/>
</dbReference>
<dbReference type="Gene3D" id="2.60.120.610">
    <property type="entry name" value="arabinofuranosyltransferase like domain"/>
    <property type="match status" value="1"/>
</dbReference>
<dbReference type="Gene3D" id="2.60.120.940">
    <property type="entry name" value="EmbC, C-terminal domain, subdomain 2"/>
    <property type="match status" value="1"/>
</dbReference>
<dbReference type="InterPro" id="IPR032731">
    <property type="entry name" value="Arabino_trans_C"/>
</dbReference>
<dbReference type="InterPro" id="IPR042486">
    <property type="entry name" value="Arabino_trans_C_2"/>
</dbReference>
<dbReference type="InterPro" id="IPR007680">
    <property type="entry name" value="Arabino_trans_central"/>
</dbReference>
<dbReference type="InterPro" id="IPR040920">
    <property type="entry name" value="Arabino_trans_N"/>
</dbReference>
<dbReference type="InterPro" id="IPR027451">
    <property type="entry name" value="EmbABC_dom1"/>
</dbReference>
<dbReference type="Pfam" id="PF14896">
    <property type="entry name" value="Arabino_trans_C"/>
    <property type="match status" value="1"/>
</dbReference>
<dbReference type="Pfam" id="PF17689">
    <property type="entry name" value="Arabino_trans_N"/>
    <property type="match status" value="1"/>
</dbReference>
<dbReference type="Pfam" id="PF04602">
    <property type="entry name" value="Arabinose_trans"/>
    <property type="match status" value="1"/>
</dbReference>
<reference key="1">
    <citation type="journal article" date="2001" name="Nature">
        <title>Massive gene decay in the leprosy bacillus.</title>
        <authorList>
            <person name="Cole S.T."/>
            <person name="Eiglmeier K."/>
            <person name="Parkhill J."/>
            <person name="James K.D."/>
            <person name="Thomson N.R."/>
            <person name="Wheeler P.R."/>
            <person name="Honore N."/>
            <person name="Garnier T."/>
            <person name="Churcher C.M."/>
            <person name="Harris D.E."/>
            <person name="Mungall K.L."/>
            <person name="Basham D."/>
            <person name="Brown D."/>
            <person name="Chillingworth T."/>
            <person name="Connor R."/>
            <person name="Davies R.M."/>
            <person name="Devlin K."/>
            <person name="Duthoy S."/>
            <person name="Feltwell T."/>
            <person name="Fraser A."/>
            <person name="Hamlin N."/>
            <person name="Holroyd S."/>
            <person name="Hornsby T."/>
            <person name="Jagels K."/>
            <person name="Lacroix C."/>
            <person name="Maclean J."/>
            <person name="Moule S."/>
            <person name="Murphy L.D."/>
            <person name="Oliver K."/>
            <person name="Quail M.A."/>
            <person name="Rajandream M.A."/>
            <person name="Rutherford K.M."/>
            <person name="Rutter S."/>
            <person name="Seeger K."/>
            <person name="Simon S."/>
            <person name="Simmonds M."/>
            <person name="Skelton J."/>
            <person name="Squares R."/>
            <person name="Squares S."/>
            <person name="Stevens K."/>
            <person name="Taylor K."/>
            <person name="Whitehead S."/>
            <person name="Woodward J.R."/>
            <person name="Barrell B.G."/>
        </authorList>
    </citation>
    <scope>NUCLEOTIDE SEQUENCE [LARGE SCALE GENOMIC DNA]</scope>
    <source>
        <strain>TN</strain>
    </source>
</reference>
<name>EMBC_MYCLE</name>
<keyword id="KW-1003">Cell membrane</keyword>
<keyword id="KW-0961">Cell wall biogenesis/degradation</keyword>
<keyword id="KW-0328">Glycosyltransferase</keyword>
<keyword id="KW-0472">Membrane</keyword>
<keyword id="KW-1185">Reference proteome</keyword>
<keyword id="KW-0808">Transferase</keyword>
<keyword id="KW-0812">Transmembrane</keyword>
<keyword id="KW-1133">Transmembrane helix</keyword>
<protein>
    <recommendedName>
        <fullName>Probable arabinosyltransferase C</fullName>
        <ecNumber>2.4.2.-</ecNumber>
    </recommendedName>
</protein>
<organism>
    <name type="scientific">Mycobacterium leprae (strain TN)</name>
    <dbReference type="NCBI Taxonomy" id="272631"/>
    <lineage>
        <taxon>Bacteria</taxon>
        <taxon>Bacillati</taxon>
        <taxon>Actinomycetota</taxon>
        <taxon>Actinomycetes</taxon>
        <taxon>Mycobacteriales</taxon>
        <taxon>Mycobacteriaceae</taxon>
        <taxon>Mycobacterium</taxon>
    </lineage>
</organism>
<evidence type="ECO:0000250" key="1"/>
<evidence type="ECO:0000255" key="2"/>
<evidence type="ECO:0000305" key="3"/>
<accession>Q9CDA7</accession>
<comment type="function">
    <text evidence="1">Arabinosyl transferase responsible for the polymerization of arabinose into the arabinan of arabinogalactan.</text>
</comment>
<comment type="subcellular location">
    <subcellularLocation>
        <location evidence="3">Cell membrane</location>
        <topology evidence="3">Multi-pass membrane protein</topology>
    </subcellularLocation>
</comment>
<comment type="similarity">
    <text evidence="3">Belongs to the emb family.</text>
</comment>
<proteinExistence type="inferred from homology"/>
<feature type="chain" id="PRO_0000220571" description="Probable arabinosyltransferase C">
    <location>
        <begin position="1"/>
        <end position="1070"/>
    </location>
</feature>
<feature type="transmembrane region" description="Helical" evidence="2">
    <location>
        <begin position="10"/>
        <end position="32"/>
    </location>
</feature>
<feature type="transmembrane region" description="Helical" evidence="2">
    <location>
        <begin position="210"/>
        <end position="232"/>
    </location>
</feature>
<feature type="transmembrane region" description="Helical" evidence="2">
    <location>
        <begin position="247"/>
        <end position="269"/>
    </location>
</feature>
<feature type="transmembrane region" description="Helical" evidence="2">
    <location>
        <begin position="399"/>
        <end position="421"/>
    </location>
</feature>
<feature type="transmembrane region" description="Helical" evidence="2">
    <location>
        <begin position="425"/>
        <end position="442"/>
    </location>
</feature>
<feature type="transmembrane region" description="Helical" evidence="2">
    <location>
        <begin position="449"/>
        <end position="471"/>
    </location>
</feature>
<feature type="transmembrane region" description="Helical" evidence="2">
    <location>
        <begin position="512"/>
        <end position="534"/>
    </location>
</feature>
<feature type="transmembrane region" description="Helical" evidence="2">
    <location>
        <begin position="547"/>
        <end position="564"/>
    </location>
</feature>
<feature type="transmembrane region" description="Helical" evidence="2">
    <location>
        <begin position="574"/>
        <end position="596"/>
    </location>
</feature>
<feature type="transmembrane region" description="Helical" evidence="2">
    <location>
        <begin position="603"/>
        <end position="625"/>
    </location>
</feature>
<feature type="transmembrane region" description="Helical" evidence="2">
    <location>
        <begin position="645"/>
        <end position="664"/>
    </location>
</feature>
<feature type="transmembrane region" description="Helical" evidence="2">
    <location>
        <begin position="685"/>
        <end position="707"/>
    </location>
</feature>
<sequence>MSGAGANYWIARLLAVIAGLLGALLAMATPFLPVNQNTAQLNWPQNSTFESVEAPLIGYVATGLNVTVPCAAAAGLTGPQSAGQTVLLSTVPKQAPKAVDRGLLIQRANDDLVLVVRNVPVVSAPMSQVLSPACQRLTFAAYFDKITAEFVGLTYGPNAEHPGVPLRGERSGYDFRPQIVGVFTDLSGPIPTGLNFSATIDTRYSSSPTLLKTIAMILGVVLTIVALVALHLLDTADGTQHRRLLPSRWWSIGCLDGLVITILAWWHFVGANTSDDGYILTMARVSEHAGYMANYYRWFGTPEAPFGWYYDLLALWAHVTTTSAWMRVPTLAMALTCWWLISREVIPRLGHAAKASRAAAWTAAGMFLAVWLPLDNGLRPEPIIALGILLTWCSVERAVATSRLLPVAVACIVGALTLFSGPTGIASIGALLVAVGPLLTILQRRSKQFGAVPLVAPILAASTVTAILIFRDQTFAGESQASLLKRAVGPSLKWFDEHIRYERLFMASPDGSVARRFAVLALLVALSVAVAMSLRKGRIPGLAAGPSRRIIGITVTSFLAMMFTPTKWTHHFGVFAGLAGSLGALAAVAVASAALRSRRNRTVFAAVVLFVVALSFASVNGWWYVSNFGVPWSNSFPKLRWSLTTALLELTVIVLLLAAWFHFVATTNGSAKTRFGVRIDRIVQSPIAIATWSLVIFEVASLTMAMIGQYPAWTVGKSNLQALTGQTCGLAEEVLVEQDPNAGMLLPVSTPVADALGSSLAEAFTANGIPADVSADPVMEPPGDRSFVKENGMTTGGEAGNEGGTNATPGINGSRAQLPYNLDPARTPVLGSWQSGIQVVARLRSGWYRLPARDKAGPLLVVSAAGRFDHHEVKLQWATDSGAASGQPGGAFQFSDVGASPAWRNLRLPLSAIPSMATQIRLVADDEDLAPQHWIALTPPRIPQLRTLQDVVGYQDPVFLDWLVGLAFPCQRPFDHQYGVDETPKWRILPDRFGAEANSPVMDNNGGGPLGVTELLLKATTVASYLKDDWSRDWGALQRLTPYYPNAQPARLSLGTTTRSGLWNPAPLRH</sequence>